<proteinExistence type="evidence at protein level"/>
<dbReference type="EMBL" id="DQ501252">
    <property type="protein sequence ID" value="ABF68613.1"/>
    <property type="molecule type" value="mRNA"/>
</dbReference>
<dbReference type="EMBL" id="AB041663">
    <property type="protein sequence ID" value="BAA95108.1"/>
    <property type="molecule type" value="mRNA"/>
</dbReference>
<dbReference type="EMBL" id="AK078407">
    <property type="protein sequence ID" value="BAC37260.1"/>
    <property type="molecule type" value="mRNA"/>
</dbReference>
<dbReference type="EMBL" id="AK078455">
    <property type="protein sequence ID" value="BAC37282.1"/>
    <property type="molecule type" value="mRNA"/>
</dbReference>
<dbReference type="EMBL" id="AK088727">
    <property type="protein sequence ID" value="BAC40530.1"/>
    <property type="molecule type" value="mRNA"/>
</dbReference>
<dbReference type="EMBL" id="BC043326">
    <property type="protein sequence ID" value="AAH43326.1"/>
    <property type="molecule type" value="mRNA"/>
</dbReference>
<dbReference type="CCDS" id="CCDS29593.1"/>
<dbReference type="RefSeq" id="NP_076220.2">
    <property type="nucleotide sequence ID" value="NM_023731.3"/>
</dbReference>
<dbReference type="SMR" id="Q9JJ89"/>
<dbReference type="BioGRID" id="224366">
    <property type="interactions" value="1"/>
</dbReference>
<dbReference type="FunCoup" id="Q9JJ89">
    <property type="interactions" value="1192"/>
</dbReference>
<dbReference type="IntAct" id="Q9JJ89">
    <property type="interactions" value="1"/>
</dbReference>
<dbReference type="MINT" id="Q9JJ89"/>
<dbReference type="STRING" id="10090.ENSMUSP00000025639"/>
<dbReference type="iPTMnet" id="Q9JJ89"/>
<dbReference type="PhosphoSitePlus" id="Q9JJ89"/>
<dbReference type="jPOST" id="Q9JJ89"/>
<dbReference type="PaxDb" id="10090-ENSMUSP00000025639"/>
<dbReference type="PeptideAtlas" id="Q9JJ89"/>
<dbReference type="ProteomicsDB" id="265600"/>
<dbReference type="Pumba" id="Q9JJ89"/>
<dbReference type="Antibodypedia" id="43508">
    <property type="antibodies" value="52 antibodies from 18 providers"/>
</dbReference>
<dbReference type="DNASU" id="108673"/>
<dbReference type="Ensembl" id="ENSMUST00000025639.7">
    <property type="protein sequence ID" value="ENSMUSP00000025639.7"/>
    <property type="gene ID" value="ENSMUSG00000024732.8"/>
</dbReference>
<dbReference type="GeneID" id="108673"/>
<dbReference type="KEGG" id="mmu:108673"/>
<dbReference type="UCSC" id="uc008grj.2">
    <property type="organism name" value="mouse"/>
</dbReference>
<dbReference type="AGR" id="MGI:1277220"/>
<dbReference type="CTD" id="79080"/>
<dbReference type="MGI" id="MGI:1277220">
    <property type="gene designation" value="Ccdc86"/>
</dbReference>
<dbReference type="VEuPathDB" id="HostDB:ENSMUSG00000024732"/>
<dbReference type="eggNOG" id="KOG4538">
    <property type="taxonomic scope" value="Eukaryota"/>
</dbReference>
<dbReference type="GeneTree" id="ENSGT00390000017281"/>
<dbReference type="HOGENOM" id="CLU_065828_0_0_1"/>
<dbReference type="InParanoid" id="Q9JJ89"/>
<dbReference type="OMA" id="PKCSQDQ"/>
<dbReference type="OrthoDB" id="277961at2759"/>
<dbReference type="PhylomeDB" id="Q9JJ89"/>
<dbReference type="TreeFam" id="TF325663"/>
<dbReference type="BioGRID-ORCS" id="108673">
    <property type="hits" value="24 hits in 81 CRISPR screens"/>
</dbReference>
<dbReference type="ChiTaRS" id="Ccdc86">
    <property type="organism name" value="mouse"/>
</dbReference>
<dbReference type="PRO" id="PR:Q9JJ89"/>
<dbReference type="Proteomes" id="UP000000589">
    <property type="component" value="Chromosome 19"/>
</dbReference>
<dbReference type="RNAct" id="Q9JJ89">
    <property type="molecule type" value="protein"/>
</dbReference>
<dbReference type="Bgee" id="ENSMUSG00000024732">
    <property type="expression patterns" value="Expressed in primitive streak and 245 other cell types or tissues"/>
</dbReference>
<dbReference type="GO" id="GO:0005694">
    <property type="term" value="C:chromosome"/>
    <property type="evidence" value="ECO:0007669"/>
    <property type="project" value="Ensembl"/>
</dbReference>
<dbReference type="GO" id="GO:0005730">
    <property type="term" value="C:nucleolus"/>
    <property type="evidence" value="ECO:0007669"/>
    <property type="project" value="Ensembl"/>
</dbReference>
<dbReference type="GO" id="GO:0005654">
    <property type="term" value="C:nucleoplasm"/>
    <property type="evidence" value="ECO:0007669"/>
    <property type="project" value="Ensembl"/>
</dbReference>
<dbReference type="GO" id="GO:0005634">
    <property type="term" value="C:nucleus"/>
    <property type="evidence" value="ECO:0000314"/>
    <property type="project" value="MGI"/>
</dbReference>
<dbReference type="InterPro" id="IPR026570">
    <property type="entry name" value="CCDC86"/>
</dbReference>
<dbReference type="InterPro" id="IPR005579">
    <property type="entry name" value="Cgr1-like"/>
</dbReference>
<dbReference type="PANTHER" id="PTHR13557">
    <property type="entry name" value="COILED-COIL DOMAIN-CONTAINING PROTEIN 86"/>
    <property type="match status" value="1"/>
</dbReference>
<dbReference type="PANTHER" id="PTHR13557:SF1">
    <property type="entry name" value="COILED-COIL DOMAIN-CONTAINING PROTEIN 86"/>
    <property type="match status" value="1"/>
</dbReference>
<dbReference type="Pfam" id="PF03879">
    <property type="entry name" value="Cgr1"/>
    <property type="match status" value="1"/>
</dbReference>
<dbReference type="PRINTS" id="PR01217">
    <property type="entry name" value="PRICHEXTENSN"/>
</dbReference>
<reference key="1">
    <citation type="journal article" date="2007" name="FEBS Lett.">
        <title>Redundant promoter elements mediate IL-3-induced expression of a novel cytokine-inducible gene, cyclon.</title>
        <authorList>
            <person name="Hoshino A."/>
            <person name="Fujii H."/>
        </authorList>
    </citation>
    <scope>NUCLEOTIDE SEQUENCE [MRNA]</scope>
    <scope>SUBCELLULAR LOCATION</scope>
    <scope>PHOSPHORYLATION</scope>
    <scope>TISSUE SPECIFICITY</scope>
    <scope>INDUCTION</scope>
</reference>
<reference key="2">
    <citation type="submission" date="2000-04" db="EMBL/GenBank/DDBJ databases">
        <title>Isolation of full-length cDNA clones from mouse brain cDNA library made by oligo-capping method.</title>
        <authorList>
            <person name="Osada N."/>
            <person name="Kusuda J."/>
            <person name="Tanuma R."/>
            <person name="Ito A."/>
            <person name="Hirata M."/>
            <person name="Sugano S."/>
            <person name="Hashimoto K."/>
        </authorList>
    </citation>
    <scope>NUCLEOTIDE SEQUENCE [LARGE SCALE MRNA]</scope>
    <source>
        <strain>C57BL/6J</strain>
        <tissue>Brain</tissue>
    </source>
</reference>
<reference key="3">
    <citation type="journal article" date="2005" name="Science">
        <title>The transcriptional landscape of the mammalian genome.</title>
        <authorList>
            <person name="Carninci P."/>
            <person name="Kasukawa T."/>
            <person name="Katayama S."/>
            <person name="Gough J."/>
            <person name="Frith M.C."/>
            <person name="Maeda N."/>
            <person name="Oyama R."/>
            <person name="Ravasi T."/>
            <person name="Lenhard B."/>
            <person name="Wells C."/>
            <person name="Kodzius R."/>
            <person name="Shimokawa K."/>
            <person name="Bajic V.B."/>
            <person name="Brenner S.E."/>
            <person name="Batalov S."/>
            <person name="Forrest A.R."/>
            <person name="Zavolan M."/>
            <person name="Davis M.J."/>
            <person name="Wilming L.G."/>
            <person name="Aidinis V."/>
            <person name="Allen J.E."/>
            <person name="Ambesi-Impiombato A."/>
            <person name="Apweiler R."/>
            <person name="Aturaliya R.N."/>
            <person name="Bailey T.L."/>
            <person name="Bansal M."/>
            <person name="Baxter L."/>
            <person name="Beisel K.W."/>
            <person name="Bersano T."/>
            <person name="Bono H."/>
            <person name="Chalk A.M."/>
            <person name="Chiu K.P."/>
            <person name="Choudhary V."/>
            <person name="Christoffels A."/>
            <person name="Clutterbuck D.R."/>
            <person name="Crowe M.L."/>
            <person name="Dalla E."/>
            <person name="Dalrymple B.P."/>
            <person name="de Bono B."/>
            <person name="Della Gatta G."/>
            <person name="di Bernardo D."/>
            <person name="Down T."/>
            <person name="Engstrom P."/>
            <person name="Fagiolini M."/>
            <person name="Faulkner G."/>
            <person name="Fletcher C.F."/>
            <person name="Fukushima T."/>
            <person name="Furuno M."/>
            <person name="Futaki S."/>
            <person name="Gariboldi M."/>
            <person name="Georgii-Hemming P."/>
            <person name="Gingeras T.R."/>
            <person name="Gojobori T."/>
            <person name="Green R.E."/>
            <person name="Gustincich S."/>
            <person name="Harbers M."/>
            <person name="Hayashi Y."/>
            <person name="Hensch T.K."/>
            <person name="Hirokawa N."/>
            <person name="Hill D."/>
            <person name="Huminiecki L."/>
            <person name="Iacono M."/>
            <person name="Ikeo K."/>
            <person name="Iwama A."/>
            <person name="Ishikawa T."/>
            <person name="Jakt M."/>
            <person name="Kanapin A."/>
            <person name="Katoh M."/>
            <person name="Kawasawa Y."/>
            <person name="Kelso J."/>
            <person name="Kitamura H."/>
            <person name="Kitano H."/>
            <person name="Kollias G."/>
            <person name="Krishnan S.P."/>
            <person name="Kruger A."/>
            <person name="Kummerfeld S.K."/>
            <person name="Kurochkin I.V."/>
            <person name="Lareau L.F."/>
            <person name="Lazarevic D."/>
            <person name="Lipovich L."/>
            <person name="Liu J."/>
            <person name="Liuni S."/>
            <person name="McWilliam S."/>
            <person name="Madan Babu M."/>
            <person name="Madera M."/>
            <person name="Marchionni L."/>
            <person name="Matsuda H."/>
            <person name="Matsuzawa S."/>
            <person name="Miki H."/>
            <person name="Mignone F."/>
            <person name="Miyake S."/>
            <person name="Morris K."/>
            <person name="Mottagui-Tabar S."/>
            <person name="Mulder N."/>
            <person name="Nakano N."/>
            <person name="Nakauchi H."/>
            <person name="Ng P."/>
            <person name="Nilsson R."/>
            <person name="Nishiguchi S."/>
            <person name="Nishikawa S."/>
            <person name="Nori F."/>
            <person name="Ohara O."/>
            <person name="Okazaki Y."/>
            <person name="Orlando V."/>
            <person name="Pang K.C."/>
            <person name="Pavan W.J."/>
            <person name="Pavesi G."/>
            <person name="Pesole G."/>
            <person name="Petrovsky N."/>
            <person name="Piazza S."/>
            <person name="Reed J."/>
            <person name="Reid J.F."/>
            <person name="Ring B.Z."/>
            <person name="Ringwald M."/>
            <person name="Rost B."/>
            <person name="Ruan Y."/>
            <person name="Salzberg S.L."/>
            <person name="Sandelin A."/>
            <person name="Schneider C."/>
            <person name="Schoenbach C."/>
            <person name="Sekiguchi K."/>
            <person name="Semple C.A."/>
            <person name="Seno S."/>
            <person name="Sessa L."/>
            <person name="Sheng Y."/>
            <person name="Shibata Y."/>
            <person name="Shimada H."/>
            <person name="Shimada K."/>
            <person name="Silva D."/>
            <person name="Sinclair B."/>
            <person name="Sperling S."/>
            <person name="Stupka E."/>
            <person name="Sugiura K."/>
            <person name="Sultana R."/>
            <person name="Takenaka Y."/>
            <person name="Taki K."/>
            <person name="Tammoja K."/>
            <person name="Tan S.L."/>
            <person name="Tang S."/>
            <person name="Taylor M.S."/>
            <person name="Tegner J."/>
            <person name="Teichmann S.A."/>
            <person name="Ueda H.R."/>
            <person name="van Nimwegen E."/>
            <person name="Verardo R."/>
            <person name="Wei C.L."/>
            <person name="Yagi K."/>
            <person name="Yamanishi H."/>
            <person name="Zabarovsky E."/>
            <person name="Zhu S."/>
            <person name="Zimmer A."/>
            <person name="Hide W."/>
            <person name="Bult C."/>
            <person name="Grimmond S.M."/>
            <person name="Teasdale R.D."/>
            <person name="Liu E.T."/>
            <person name="Brusic V."/>
            <person name="Quackenbush J."/>
            <person name="Wahlestedt C."/>
            <person name="Mattick J.S."/>
            <person name="Hume D.A."/>
            <person name="Kai C."/>
            <person name="Sasaki D."/>
            <person name="Tomaru Y."/>
            <person name="Fukuda S."/>
            <person name="Kanamori-Katayama M."/>
            <person name="Suzuki M."/>
            <person name="Aoki J."/>
            <person name="Arakawa T."/>
            <person name="Iida J."/>
            <person name="Imamura K."/>
            <person name="Itoh M."/>
            <person name="Kato T."/>
            <person name="Kawaji H."/>
            <person name="Kawagashira N."/>
            <person name="Kawashima T."/>
            <person name="Kojima M."/>
            <person name="Kondo S."/>
            <person name="Konno H."/>
            <person name="Nakano K."/>
            <person name="Ninomiya N."/>
            <person name="Nishio T."/>
            <person name="Okada M."/>
            <person name="Plessy C."/>
            <person name="Shibata K."/>
            <person name="Shiraki T."/>
            <person name="Suzuki S."/>
            <person name="Tagami M."/>
            <person name="Waki K."/>
            <person name="Watahiki A."/>
            <person name="Okamura-Oho Y."/>
            <person name="Suzuki H."/>
            <person name="Kawai J."/>
            <person name="Hayashizaki Y."/>
        </authorList>
    </citation>
    <scope>NUCLEOTIDE SEQUENCE [LARGE SCALE MRNA]</scope>
    <source>
        <strain>C57BL/6J</strain>
        <strain>NOD</strain>
        <tissue>Thymus</tissue>
        <tissue>Wolffian duct</tissue>
    </source>
</reference>
<reference key="4">
    <citation type="journal article" date="2004" name="Genome Res.">
        <title>The status, quality, and expansion of the NIH full-length cDNA project: the Mammalian Gene Collection (MGC).</title>
        <authorList>
            <consortium name="The MGC Project Team"/>
        </authorList>
    </citation>
    <scope>NUCLEOTIDE SEQUENCE [LARGE SCALE MRNA]</scope>
    <source>
        <strain>FVB/N-3</strain>
        <tissue>Mammary tumor</tissue>
    </source>
</reference>
<reference key="5">
    <citation type="journal article" date="2007" name="Proc. Natl. Acad. Sci. U.S.A.">
        <title>Large-scale phosphorylation analysis of mouse liver.</title>
        <authorList>
            <person name="Villen J."/>
            <person name="Beausoleil S.A."/>
            <person name="Gerber S.A."/>
            <person name="Gygi S.P."/>
        </authorList>
    </citation>
    <scope>PHOSPHORYLATION [LARGE SCALE ANALYSIS] AT SER-18</scope>
    <scope>IDENTIFICATION BY MASS SPECTROMETRY [LARGE SCALE ANALYSIS]</scope>
    <source>
        <tissue>Liver</tissue>
    </source>
</reference>
<reference key="6">
    <citation type="journal article" date="2010" name="Cell">
        <title>A tissue-specific atlas of mouse protein phosphorylation and expression.</title>
        <authorList>
            <person name="Huttlin E.L."/>
            <person name="Jedrychowski M.P."/>
            <person name="Elias J.E."/>
            <person name="Goswami T."/>
            <person name="Rad R."/>
            <person name="Beausoleil S.A."/>
            <person name="Villen J."/>
            <person name="Haas W."/>
            <person name="Sowa M.E."/>
            <person name="Gygi S.P."/>
        </authorList>
    </citation>
    <scope>PHOSPHORYLATION [LARGE SCALE ANALYSIS] AT SER-18; SER-194; SER-225; SER-252; SER-253 AND SER-283</scope>
    <scope>IDENTIFICATION BY MASS SPECTROMETRY [LARGE SCALE ANALYSIS]</scope>
    <source>
        <tissue>Kidney</tissue>
        <tissue>Liver</tissue>
        <tissue>Pancreas</tissue>
        <tissue>Spleen</tissue>
    </source>
</reference>
<reference key="7">
    <citation type="journal article" date="2014" name="Nature">
        <title>Citrullination regulates pluripotency and histone H1 binding to chromatin.</title>
        <authorList>
            <person name="Christophorou M.A."/>
            <person name="Castelo-Branco G."/>
            <person name="Halley-Stott R.P."/>
            <person name="Oliveira C.S."/>
            <person name="Loos R."/>
            <person name="Radzisheuskaya A."/>
            <person name="Mowen K.A."/>
            <person name="Bertone P."/>
            <person name="Silva J.C."/>
            <person name="Zernicka-Goetz M."/>
            <person name="Nielsen M.L."/>
            <person name="Gurdon J.B."/>
            <person name="Kouzarides T."/>
        </authorList>
    </citation>
    <scope>CITRULLINATION AT ARG-408</scope>
</reference>
<keyword id="KW-0158">Chromosome</keyword>
<keyword id="KW-0164">Citrullination</keyword>
<keyword id="KW-0175">Coiled coil</keyword>
<keyword id="KW-0539">Nucleus</keyword>
<keyword id="KW-0597">Phosphoprotein</keyword>
<keyword id="KW-1185">Reference proteome</keyword>
<feature type="chain" id="PRO_0000286093" description="Coiled-coil domain-containing protein 86">
    <location>
        <begin position="1"/>
        <end position="426"/>
    </location>
</feature>
<feature type="region of interest" description="Disordered" evidence="3">
    <location>
        <begin position="1"/>
        <end position="426"/>
    </location>
</feature>
<feature type="coiled-coil region" evidence="2">
    <location>
        <begin position="346"/>
        <end position="389"/>
    </location>
</feature>
<feature type="compositionally biased region" description="Basic and acidic residues" evidence="3">
    <location>
        <begin position="33"/>
        <end position="49"/>
    </location>
</feature>
<feature type="compositionally biased region" description="Pro residues" evidence="3">
    <location>
        <begin position="55"/>
        <end position="145"/>
    </location>
</feature>
<feature type="compositionally biased region" description="Polar residues" evidence="3">
    <location>
        <begin position="241"/>
        <end position="255"/>
    </location>
</feature>
<feature type="compositionally biased region" description="Basic residues" evidence="3">
    <location>
        <begin position="304"/>
        <end position="320"/>
    </location>
</feature>
<feature type="compositionally biased region" description="Basic and acidic residues" evidence="3">
    <location>
        <begin position="339"/>
        <end position="383"/>
    </location>
</feature>
<feature type="compositionally biased region" description="Basic residues" evidence="3">
    <location>
        <begin position="392"/>
        <end position="402"/>
    </location>
</feature>
<feature type="modified residue" description="Phosphoserine" evidence="9 10">
    <location>
        <position position="18"/>
    </location>
</feature>
<feature type="modified residue" description="Phosphoserine" evidence="1">
    <location>
        <position position="59"/>
    </location>
</feature>
<feature type="modified residue" description="Phosphothreonine" evidence="1">
    <location>
        <position position="66"/>
    </location>
</feature>
<feature type="modified residue" description="Phosphoserine" evidence="1">
    <location>
        <position position="67"/>
    </location>
</feature>
<feature type="modified residue" description="Phosphoserine" evidence="1">
    <location>
        <position position="70"/>
    </location>
</feature>
<feature type="modified residue" description="Phosphoserine" evidence="1">
    <location>
        <position position="161"/>
    </location>
</feature>
<feature type="modified residue" description="Phosphoserine" evidence="1">
    <location>
        <position position="172"/>
    </location>
</feature>
<feature type="modified residue" description="Phosphoserine" evidence="1">
    <location>
        <position position="183"/>
    </location>
</feature>
<feature type="modified residue" description="Phosphoserine" evidence="1">
    <location>
        <position position="191"/>
    </location>
</feature>
<feature type="modified residue" description="Phosphoserine" evidence="10">
    <location>
        <position position="194"/>
    </location>
</feature>
<feature type="modified residue" description="Phosphoserine" evidence="10">
    <location>
        <position position="225"/>
    </location>
</feature>
<feature type="modified residue" description="Phosphoserine" evidence="10">
    <location>
        <position position="252"/>
    </location>
</feature>
<feature type="modified residue" description="Phosphoserine" evidence="10">
    <location>
        <position position="253"/>
    </location>
</feature>
<feature type="modified residue" description="Phosphoserine" evidence="10">
    <location>
        <position position="283"/>
    </location>
</feature>
<feature type="modified residue" description="Citrulline" evidence="5">
    <location>
        <position position="408"/>
    </location>
</feature>
<feature type="sequence conflict" description="In Ref. 2; BAA95108." evidence="7" ref="2">
    <original>M</original>
    <variation>L</variation>
    <location>
        <position position="1"/>
    </location>
</feature>
<feature type="sequence conflict" description="In Ref. 3; BAC37282/BAC37260." evidence="7" ref="3">
    <original>C</original>
    <variation>F</variation>
    <location>
        <position position="92"/>
    </location>
</feature>
<organism>
    <name type="scientific">Mus musculus</name>
    <name type="common">Mouse</name>
    <dbReference type="NCBI Taxonomy" id="10090"/>
    <lineage>
        <taxon>Eukaryota</taxon>
        <taxon>Metazoa</taxon>
        <taxon>Chordata</taxon>
        <taxon>Craniata</taxon>
        <taxon>Vertebrata</taxon>
        <taxon>Euteleostomi</taxon>
        <taxon>Mammalia</taxon>
        <taxon>Eutheria</taxon>
        <taxon>Euarchontoglires</taxon>
        <taxon>Glires</taxon>
        <taxon>Rodentia</taxon>
        <taxon>Myomorpha</taxon>
        <taxon>Muroidea</taxon>
        <taxon>Muridae</taxon>
        <taxon>Murinae</taxon>
        <taxon>Mus</taxon>
        <taxon>Mus</taxon>
    </lineage>
</organism>
<name>CCD86_MOUSE</name>
<gene>
    <name evidence="8" type="primary">Ccdc86</name>
    <name evidence="6" type="synonym">Cyclon</name>
    <name type="synonym">D19Ertd678e</name>
    <name type="ORF">MNCb-4327</name>
</gene>
<sequence>MDTPLRRSRRLEGLKPLSPENLPVPEVSRAKRALVDFKSNSEETGELKSTRVPPLSLPSPGPQPETSPGSPCPPLSLPSPGPQPETSPGSPCPPLSLPSPGPQPETSPGSPCPPLSLPSPGPQPETSPGSPCPPLSLPSPGPQPEASPGSPGPRQDADDGSPQRQPEPHPGSLQPHQDLGLESPAGQTESSPESPQREQPSKLPPPQGELDSEAAHAKEEVIPGSPEPCPGQQAPGPEPSQPAQELTVQAPSSPERQLEPGKLPPAGETVTESLNLKKRVIASPQAPASKKLKEKEELPVIPKGKPKSGRVWKDRSKKRFSQMVQDKPLRTSWQRKMKERQERKLAKDFARHLEEEKQRRRQEKKERRAENLRRRLENERKAEIVQVIRNPAKLKKAKKKQLRSIEKRDTLALLQKQPPQRPVAKV</sequence>
<comment type="function">
    <text evidence="1">Required for proper chromosome segregation during mitosis and error-free mitotic progression.</text>
</comment>
<comment type="subcellular location">
    <subcellularLocation>
        <location evidence="4">Nucleus</location>
    </subcellularLocation>
    <subcellularLocation>
        <location evidence="1">Chromosome</location>
    </subcellularLocation>
    <subcellularLocation>
        <location evidence="1">Nucleus</location>
        <location evidence="1">Nucleolus</location>
    </subcellularLocation>
    <text evidence="1">Localized to the nucleolus during the interphase and localized to the perichromosomal layer (also known as chromosome periphery) during mitosis; is particularly enriched at the perichromosomal layer during anaphase. Colocalizes with MKI67 during interphase and mitotic exit.</text>
</comment>
<comment type="tissue specificity">
    <text evidence="4">Highly expressed in testis. Also expressed in heart, liver, kidney.</text>
</comment>
<comment type="induction">
    <text evidence="4">By interleukin-3 (IL3).</text>
</comment>
<comment type="PTM">
    <text evidence="5">Citrullinated by PADI4.</text>
</comment>
<evidence type="ECO:0000250" key="1">
    <source>
        <dbReference type="UniProtKB" id="Q9H6F5"/>
    </source>
</evidence>
<evidence type="ECO:0000255" key="2"/>
<evidence type="ECO:0000256" key="3">
    <source>
        <dbReference type="SAM" id="MobiDB-lite"/>
    </source>
</evidence>
<evidence type="ECO:0000269" key="4">
    <source>
    </source>
</evidence>
<evidence type="ECO:0000269" key="5">
    <source>
    </source>
</evidence>
<evidence type="ECO:0000303" key="6">
    <source>
    </source>
</evidence>
<evidence type="ECO:0000305" key="7"/>
<evidence type="ECO:0000312" key="8">
    <source>
        <dbReference type="MGI" id="MGI:1277220"/>
    </source>
</evidence>
<evidence type="ECO:0007744" key="9">
    <source>
    </source>
</evidence>
<evidence type="ECO:0007744" key="10">
    <source>
    </source>
</evidence>
<accession>Q9JJ89</accession>
<accession>Q8BGH9</accession>
<accession>Q8C2F2</accession>
<protein>
    <recommendedName>
        <fullName>Coiled-coil domain-containing protein 86</fullName>
    </recommendedName>
    <alternativeName>
        <fullName evidence="6">Cytokine-induced protein with coiled-coil domain</fullName>
        <shortName>mCyclon</shortName>
    </alternativeName>
</protein>